<feature type="chain" id="PRO_1000085829" description="Shikimate kinase 2">
    <location>
        <begin position="1"/>
        <end position="181"/>
    </location>
</feature>
<feature type="region of interest" description="LID domain">
    <location>
        <begin position="112"/>
        <end position="126"/>
    </location>
</feature>
<feature type="binding site" evidence="1">
    <location>
        <begin position="12"/>
        <end position="17"/>
    </location>
    <ligand>
        <name>ATP</name>
        <dbReference type="ChEBI" id="CHEBI:30616"/>
    </ligand>
</feature>
<feature type="binding site" evidence="1">
    <location>
        <position position="16"/>
    </location>
    <ligand>
        <name>Mg(2+)</name>
        <dbReference type="ChEBI" id="CHEBI:18420"/>
    </ligand>
</feature>
<feature type="binding site" evidence="1">
    <location>
        <position position="32"/>
    </location>
    <ligand>
        <name>Mg(2+)</name>
        <dbReference type="ChEBI" id="CHEBI:18420"/>
    </ligand>
</feature>
<feature type="binding site" evidence="1">
    <location>
        <position position="34"/>
    </location>
    <ligand>
        <name>substrate</name>
    </ligand>
</feature>
<feature type="binding site" evidence="1">
    <location>
        <position position="58"/>
    </location>
    <ligand>
        <name>substrate</name>
    </ligand>
</feature>
<feature type="binding site" evidence="1">
    <location>
        <position position="79"/>
    </location>
    <ligand>
        <name>substrate</name>
    </ligand>
</feature>
<feature type="binding site" evidence="1">
    <location>
        <position position="120"/>
    </location>
    <ligand>
        <name>ATP</name>
        <dbReference type="ChEBI" id="CHEBI:30616"/>
    </ligand>
</feature>
<feature type="binding site" evidence="1">
    <location>
        <position position="139"/>
    </location>
    <ligand>
        <name>substrate</name>
    </ligand>
</feature>
<protein>
    <recommendedName>
        <fullName evidence="1">Shikimate kinase 2</fullName>
        <shortName evidence="1">SK 2</shortName>
        <ecNumber evidence="1">2.7.1.71</ecNumber>
    </recommendedName>
</protein>
<proteinExistence type="inferred from homology"/>
<comment type="function">
    <text evidence="1">Catalyzes the specific phosphorylation of the 3-hydroxyl group of shikimic acid using ATP as a cosubstrate.</text>
</comment>
<comment type="catalytic activity">
    <reaction evidence="1">
        <text>shikimate + ATP = 3-phosphoshikimate + ADP + H(+)</text>
        <dbReference type="Rhea" id="RHEA:13121"/>
        <dbReference type="ChEBI" id="CHEBI:15378"/>
        <dbReference type="ChEBI" id="CHEBI:30616"/>
        <dbReference type="ChEBI" id="CHEBI:36208"/>
        <dbReference type="ChEBI" id="CHEBI:145989"/>
        <dbReference type="ChEBI" id="CHEBI:456216"/>
        <dbReference type="EC" id="2.7.1.71"/>
    </reaction>
</comment>
<comment type="cofactor">
    <cofactor evidence="1">
        <name>Mg(2+)</name>
        <dbReference type="ChEBI" id="CHEBI:18420"/>
    </cofactor>
    <text evidence="1">Binds 1 Mg(2+) ion per subunit.</text>
</comment>
<comment type="pathway">
    <text evidence="1">Metabolic intermediate biosynthesis; chorismate biosynthesis; chorismate from D-erythrose 4-phosphate and phosphoenolpyruvate: step 5/7.</text>
</comment>
<comment type="subunit">
    <text evidence="1">Monomer.</text>
</comment>
<comment type="subcellular location">
    <subcellularLocation>
        <location evidence="1">Cytoplasm</location>
    </subcellularLocation>
</comment>
<comment type="domain">
    <text evidence="1">The LID domain closes over the active site upon ATP binding.</text>
</comment>
<comment type="similarity">
    <text evidence="1">Belongs to the shikimate kinase family. AroL subfamily.</text>
</comment>
<dbReference type="EC" id="2.7.1.71" evidence="1"/>
<dbReference type="EMBL" id="CP000886">
    <property type="protein sequence ID" value="ABX68563.1"/>
    <property type="molecule type" value="Genomic_DNA"/>
</dbReference>
<dbReference type="RefSeq" id="WP_000983569.1">
    <property type="nucleotide sequence ID" value="NC_010102.1"/>
</dbReference>
<dbReference type="SMR" id="A9MX50"/>
<dbReference type="KEGG" id="spq:SPAB_03202"/>
<dbReference type="PATRIC" id="fig|1016998.12.peg.3022"/>
<dbReference type="HOGENOM" id="CLU_057607_4_3_6"/>
<dbReference type="BioCyc" id="SENT1016998:SPAB_RS13085-MONOMER"/>
<dbReference type="UniPathway" id="UPA00053">
    <property type="reaction ID" value="UER00088"/>
</dbReference>
<dbReference type="Proteomes" id="UP000008556">
    <property type="component" value="Chromosome"/>
</dbReference>
<dbReference type="GO" id="GO:0005829">
    <property type="term" value="C:cytosol"/>
    <property type="evidence" value="ECO:0007669"/>
    <property type="project" value="TreeGrafter"/>
</dbReference>
<dbReference type="GO" id="GO:0005524">
    <property type="term" value="F:ATP binding"/>
    <property type="evidence" value="ECO:0007669"/>
    <property type="project" value="UniProtKB-UniRule"/>
</dbReference>
<dbReference type="GO" id="GO:0000287">
    <property type="term" value="F:magnesium ion binding"/>
    <property type="evidence" value="ECO:0007669"/>
    <property type="project" value="UniProtKB-UniRule"/>
</dbReference>
<dbReference type="GO" id="GO:0004765">
    <property type="term" value="F:shikimate kinase activity"/>
    <property type="evidence" value="ECO:0007669"/>
    <property type="project" value="UniProtKB-UniRule"/>
</dbReference>
<dbReference type="GO" id="GO:0008652">
    <property type="term" value="P:amino acid biosynthetic process"/>
    <property type="evidence" value="ECO:0007669"/>
    <property type="project" value="UniProtKB-KW"/>
</dbReference>
<dbReference type="GO" id="GO:0009073">
    <property type="term" value="P:aromatic amino acid family biosynthetic process"/>
    <property type="evidence" value="ECO:0007669"/>
    <property type="project" value="UniProtKB-KW"/>
</dbReference>
<dbReference type="GO" id="GO:0009423">
    <property type="term" value="P:chorismate biosynthetic process"/>
    <property type="evidence" value="ECO:0007669"/>
    <property type="project" value="UniProtKB-UniRule"/>
</dbReference>
<dbReference type="CDD" id="cd00464">
    <property type="entry name" value="SK"/>
    <property type="match status" value="1"/>
</dbReference>
<dbReference type="FunFam" id="3.40.50.300:FF:000408">
    <property type="entry name" value="Shikimate kinase 2"/>
    <property type="match status" value="1"/>
</dbReference>
<dbReference type="Gene3D" id="3.40.50.300">
    <property type="entry name" value="P-loop containing nucleotide triphosphate hydrolases"/>
    <property type="match status" value="1"/>
</dbReference>
<dbReference type="HAMAP" id="MF_00109">
    <property type="entry name" value="Shikimate_kinase"/>
    <property type="match status" value="1"/>
</dbReference>
<dbReference type="HAMAP" id="MF_01269">
    <property type="entry name" value="Shikimate_kinase_2"/>
    <property type="match status" value="1"/>
</dbReference>
<dbReference type="InterPro" id="IPR027417">
    <property type="entry name" value="P-loop_NTPase"/>
</dbReference>
<dbReference type="InterPro" id="IPR031322">
    <property type="entry name" value="Shikimate/glucono_kinase"/>
</dbReference>
<dbReference type="InterPro" id="IPR000623">
    <property type="entry name" value="Shikimate_kinase/TSH1"/>
</dbReference>
<dbReference type="InterPro" id="IPR027544">
    <property type="entry name" value="Shikimate_kinase_2"/>
</dbReference>
<dbReference type="InterPro" id="IPR023000">
    <property type="entry name" value="Shikimate_kinase_CS"/>
</dbReference>
<dbReference type="NCBIfam" id="NF002988">
    <property type="entry name" value="PRK03731.1"/>
    <property type="match status" value="1"/>
</dbReference>
<dbReference type="PANTHER" id="PTHR21087">
    <property type="entry name" value="SHIKIMATE KINASE"/>
    <property type="match status" value="1"/>
</dbReference>
<dbReference type="PANTHER" id="PTHR21087:SF21">
    <property type="entry name" value="SHIKIMATE KINASE 2"/>
    <property type="match status" value="1"/>
</dbReference>
<dbReference type="Pfam" id="PF01202">
    <property type="entry name" value="SKI"/>
    <property type="match status" value="1"/>
</dbReference>
<dbReference type="PRINTS" id="PR01100">
    <property type="entry name" value="SHIKIMTKNASE"/>
</dbReference>
<dbReference type="SUPFAM" id="SSF52540">
    <property type="entry name" value="P-loop containing nucleoside triphosphate hydrolases"/>
    <property type="match status" value="1"/>
</dbReference>
<dbReference type="PROSITE" id="PS01128">
    <property type="entry name" value="SHIKIMATE_KINASE"/>
    <property type="match status" value="1"/>
</dbReference>
<keyword id="KW-0028">Amino-acid biosynthesis</keyword>
<keyword id="KW-0057">Aromatic amino acid biosynthesis</keyword>
<keyword id="KW-0067">ATP-binding</keyword>
<keyword id="KW-0963">Cytoplasm</keyword>
<keyword id="KW-0418">Kinase</keyword>
<keyword id="KW-0460">Magnesium</keyword>
<keyword id="KW-0479">Metal-binding</keyword>
<keyword id="KW-0547">Nucleotide-binding</keyword>
<keyword id="KW-0808">Transferase</keyword>
<organism>
    <name type="scientific">Salmonella paratyphi B (strain ATCC BAA-1250 / SPB7)</name>
    <dbReference type="NCBI Taxonomy" id="1016998"/>
    <lineage>
        <taxon>Bacteria</taxon>
        <taxon>Pseudomonadati</taxon>
        <taxon>Pseudomonadota</taxon>
        <taxon>Gammaproteobacteria</taxon>
        <taxon>Enterobacterales</taxon>
        <taxon>Enterobacteriaceae</taxon>
        <taxon>Salmonella</taxon>
    </lineage>
</organism>
<name>AROL_SALPB</name>
<sequence length="181" mass="19804">MMQPLYLVGPRGCGKTTIGMALAQATGFRFADTDRWLQSHVQMSVADIVEKEGWGGFRARETAALEAVSAPSTVVATGGGIILTEYNRRYMHRVGVVIYLCAPVSTLVNRLEAEPEADLRPTLTGKPLSEEVREVLEQRDALYRETAHYIIDATKAPAQVVSEIIAALPPSTQRLQGDVYT</sequence>
<evidence type="ECO:0000255" key="1">
    <source>
        <dbReference type="HAMAP-Rule" id="MF_01269"/>
    </source>
</evidence>
<gene>
    <name evidence="1" type="primary">aroL</name>
    <name type="ordered locus">SPAB_03202</name>
</gene>
<reference key="1">
    <citation type="submission" date="2007-11" db="EMBL/GenBank/DDBJ databases">
        <authorList>
            <consortium name="The Salmonella enterica serovar Paratyphi B Genome Sequencing Project"/>
            <person name="McClelland M."/>
            <person name="Sanderson E.K."/>
            <person name="Porwollik S."/>
            <person name="Spieth J."/>
            <person name="Clifton W.S."/>
            <person name="Fulton R."/>
            <person name="Cordes M."/>
            <person name="Wollam A."/>
            <person name="Shah N."/>
            <person name="Pepin K."/>
            <person name="Bhonagiri V."/>
            <person name="Nash W."/>
            <person name="Johnson M."/>
            <person name="Thiruvilangam P."/>
            <person name="Wilson R."/>
        </authorList>
    </citation>
    <scope>NUCLEOTIDE SEQUENCE [LARGE SCALE GENOMIC DNA]</scope>
    <source>
        <strain>ATCC BAA-1250 / SPB7</strain>
    </source>
</reference>
<accession>A9MX50</accession>